<reference key="1">
    <citation type="journal article" date="2005" name="Nucleic Acids Res.">
        <title>Genome dynamics and diversity of Shigella species, the etiologic agents of bacillary dysentery.</title>
        <authorList>
            <person name="Yang F."/>
            <person name="Yang J."/>
            <person name="Zhang X."/>
            <person name="Chen L."/>
            <person name="Jiang Y."/>
            <person name="Yan Y."/>
            <person name="Tang X."/>
            <person name="Wang J."/>
            <person name="Xiong Z."/>
            <person name="Dong J."/>
            <person name="Xue Y."/>
            <person name="Zhu Y."/>
            <person name="Xu X."/>
            <person name="Sun L."/>
            <person name="Chen S."/>
            <person name="Nie H."/>
            <person name="Peng J."/>
            <person name="Xu J."/>
            <person name="Wang Y."/>
            <person name="Yuan Z."/>
            <person name="Wen Y."/>
            <person name="Yao Z."/>
            <person name="Shen Y."/>
            <person name="Qiang B."/>
            <person name="Hou Y."/>
            <person name="Yu J."/>
            <person name="Jin Q."/>
        </authorList>
    </citation>
    <scope>NUCLEOTIDE SEQUENCE [LARGE SCALE GENOMIC DNA]</scope>
    <source>
        <strain>Ss046</strain>
    </source>
</reference>
<gene>
    <name evidence="1" type="primary">mraY</name>
    <name type="ordered locus">SSON_0095</name>
</gene>
<evidence type="ECO:0000255" key="1">
    <source>
        <dbReference type="HAMAP-Rule" id="MF_00038"/>
    </source>
</evidence>
<comment type="function">
    <text evidence="1">Catalyzes the initial step of the lipid cycle reactions in the biosynthesis of the cell wall peptidoglycan: transfers peptidoglycan precursor phospho-MurNAc-pentapeptide from UDP-MurNAc-pentapeptide onto the lipid carrier undecaprenyl phosphate, yielding undecaprenyl-pyrophosphoryl-MurNAc-pentapeptide, known as lipid I.</text>
</comment>
<comment type="catalytic activity">
    <reaction evidence="1">
        <text>UDP-N-acetyl-alpha-D-muramoyl-L-alanyl-gamma-D-glutamyl-meso-2,6-diaminopimeloyl-D-alanyl-D-alanine + di-trans,octa-cis-undecaprenyl phosphate = di-trans,octa-cis-undecaprenyl diphospho-N-acetyl-alpha-D-muramoyl-L-alanyl-D-glutamyl-meso-2,6-diaminopimeloyl-D-alanyl-D-alanine + UMP</text>
        <dbReference type="Rhea" id="RHEA:28386"/>
        <dbReference type="ChEBI" id="CHEBI:57865"/>
        <dbReference type="ChEBI" id="CHEBI:60392"/>
        <dbReference type="ChEBI" id="CHEBI:61386"/>
        <dbReference type="ChEBI" id="CHEBI:61387"/>
        <dbReference type="EC" id="2.7.8.13"/>
    </reaction>
</comment>
<comment type="cofactor">
    <cofactor evidence="1">
        <name>Mg(2+)</name>
        <dbReference type="ChEBI" id="CHEBI:18420"/>
    </cofactor>
</comment>
<comment type="pathway">
    <text evidence="1">Cell wall biogenesis; peptidoglycan biosynthesis.</text>
</comment>
<comment type="subcellular location">
    <subcellularLocation>
        <location evidence="1">Cell inner membrane</location>
        <topology evidence="1">Multi-pass membrane protein</topology>
    </subcellularLocation>
</comment>
<comment type="similarity">
    <text evidence="1">Belongs to the glycosyltransferase 4 family. MraY subfamily.</text>
</comment>
<keyword id="KW-0131">Cell cycle</keyword>
<keyword id="KW-0132">Cell division</keyword>
<keyword id="KW-0997">Cell inner membrane</keyword>
<keyword id="KW-1003">Cell membrane</keyword>
<keyword id="KW-0133">Cell shape</keyword>
<keyword id="KW-0961">Cell wall biogenesis/degradation</keyword>
<keyword id="KW-0460">Magnesium</keyword>
<keyword id="KW-0472">Membrane</keyword>
<keyword id="KW-0479">Metal-binding</keyword>
<keyword id="KW-0573">Peptidoglycan synthesis</keyword>
<keyword id="KW-1185">Reference proteome</keyword>
<keyword id="KW-0808">Transferase</keyword>
<keyword id="KW-0812">Transmembrane</keyword>
<keyword id="KW-1133">Transmembrane helix</keyword>
<proteinExistence type="inferred from homology"/>
<accession>Q3Z5S2</accession>
<organism>
    <name type="scientific">Shigella sonnei (strain Ss046)</name>
    <dbReference type="NCBI Taxonomy" id="300269"/>
    <lineage>
        <taxon>Bacteria</taxon>
        <taxon>Pseudomonadati</taxon>
        <taxon>Pseudomonadota</taxon>
        <taxon>Gammaproteobacteria</taxon>
        <taxon>Enterobacterales</taxon>
        <taxon>Enterobacteriaceae</taxon>
        <taxon>Shigella</taxon>
    </lineage>
</organism>
<dbReference type="EC" id="2.7.8.13" evidence="1"/>
<dbReference type="EMBL" id="CP000038">
    <property type="protein sequence ID" value="AAZ86890.1"/>
    <property type="molecule type" value="Genomic_DNA"/>
</dbReference>
<dbReference type="RefSeq" id="WP_000964131.1">
    <property type="nucleotide sequence ID" value="NC_007384.1"/>
</dbReference>
<dbReference type="SMR" id="Q3Z5S2"/>
<dbReference type="GeneID" id="93777347"/>
<dbReference type="KEGG" id="ssn:SSON_0095"/>
<dbReference type="HOGENOM" id="CLU_023982_0_0_6"/>
<dbReference type="UniPathway" id="UPA00219"/>
<dbReference type="Proteomes" id="UP000002529">
    <property type="component" value="Chromosome"/>
</dbReference>
<dbReference type="GO" id="GO:0005886">
    <property type="term" value="C:plasma membrane"/>
    <property type="evidence" value="ECO:0007669"/>
    <property type="project" value="UniProtKB-SubCell"/>
</dbReference>
<dbReference type="GO" id="GO:0046872">
    <property type="term" value="F:metal ion binding"/>
    <property type="evidence" value="ECO:0007669"/>
    <property type="project" value="UniProtKB-KW"/>
</dbReference>
<dbReference type="GO" id="GO:0008963">
    <property type="term" value="F:phospho-N-acetylmuramoyl-pentapeptide-transferase activity"/>
    <property type="evidence" value="ECO:0007669"/>
    <property type="project" value="UniProtKB-UniRule"/>
</dbReference>
<dbReference type="GO" id="GO:0051992">
    <property type="term" value="F:UDP-N-acetylmuramoyl-L-alanyl-D-glutamyl-meso-2,6-diaminopimelyl-D-alanyl-D-alanine:undecaprenyl-phosphate transferase activity"/>
    <property type="evidence" value="ECO:0007669"/>
    <property type="project" value="RHEA"/>
</dbReference>
<dbReference type="GO" id="GO:0051301">
    <property type="term" value="P:cell division"/>
    <property type="evidence" value="ECO:0007669"/>
    <property type="project" value="UniProtKB-KW"/>
</dbReference>
<dbReference type="GO" id="GO:0071555">
    <property type="term" value="P:cell wall organization"/>
    <property type="evidence" value="ECO:0007669"/>
    <property type="project" value="UniProtKB-KW"/>
</dbReference>
<dbReference type="GO" id="GO:0009252">
    <property type="term" value="P:peptidoglycan biosynthetic process"/>
    <property type="evidence" value="ECO:0007669"/>
    <property type="project" value="UniProtKB-UniRule"/>
</dbReference>
<dbReference type="GO" id="GO:0008360">
    <property type="term" value="P:regulation of cell shape"/>
    <property type="evidence" value="ECO:0007669"/>
    <property type="project" value="UniProtKB-KW"/>
</dbReference>
<dbReference type="CDD" id="cd06852">
    <property type="entry name" value="GT_MraY"/>
    <property type="match status" value="1"/>
</dbReference>
<dbReference type="HAMAP" id="MF_00038">
    <property type="entry name" value="MraY"/>
    <property type="match status" value="1"/>
</dbReference>
<dbReference type="InterPro" id="IPR000715">
    <property type="entry name" value="Glycosyl_transferase_4"/>
</dbReference>
<dbReference type="InterPro" id="IPR003524">
    <property type="entry name" value="PNAcMuramoyl-5peptid_Trfase"/>
</dbReference>
<dbReference type="InterPro" id="IPR018480">
    <property type="entry name" value="PNAcMuramoyl-5peptid_Trfase_CS"/>
</dbReference>
<dbReference type="NCBIfam" id="TIGR00445">
    <property type="entry name" value="mraY"/>
    <property type="match status" value="1"/>
</dbReference>
<dbReference type="PANTHER" id="PTHR22926">
    <property type="entry name" value="PHOSPHO-N-ACETYLMURAMOYL-PENTAPEPTIDE-TRANSFERASE"/>
    <property type="match status" value="1"/>
</dbReference>
<dbReference type="PANTHER" id="PTHR22926:SF5">
    <property type="entry name" value="PHOSPHO-N-ACETYLMURAMOYL-PENTAPEPTIDE-TRANSFERASE HOMOLOG"/>
    <property type="match status" value="1"/>
</dbReference>
<dbReference type="Pfam" id="PF00953">
    <property type="entry name" value="Glycos_transf_4"/>
    <property type="match status" value="1"/>
</dbReference>
<dbReference type="Pfam" id="PF10555">
    <property type="entry name" value="MraY_sig1"/>
    <property type="match status" value="1"/>
</dbReference>
<dbReference type="PROSITE" id="PS01347">
    <property type="entry name" value="MRAY_1"/>
    <property type="match status" value="1"/>
</dbReference>
<dbReference type="PROSITE" id="PS01348">
    <property type="entry name" value="MRAY_2"/>
    <property type="match status" value="1"/>
</dbReference>
<name>MRAY_SHISS</name>
<sequence>MLVWLAEHLVKYYSGFNVFSYLTFRAIVSLLTALFISLWMGPRMIAHLQKLSFGQVVRNDGPESHFSKRGTPTMGGIMILTAIVISVLLWAYPSNPYVWCVLVVLVGYGVIGFVDDYRKVVRKDTKGLIARWKYFWMSVIALGVAFALYLAGKDTPATQLVVPFFKDVMPQLGLFYILLAYFVIVGTGNAVNLTDGLDGLAIMPTVFVAGGFALVAWATGNMNFASYLHIPYLRHAGELVIVCTAIVGAGLGFLWFNTYPAQVFMGDVGSLALGGALGIIAVLLRQEFLLVIMGGVFVVETLSVILQVGSFKLRGQRIFRMAPIHHHYELKGWPEPRVIVRFWIISLMLVLIGLATLKVR</sequence>
<protein>
    <recommendedName>
        <fullName evidence="1">Phospho-N-acetylmuramoyl-pentapeptide-transferase</fullName>
        <ecNumber evidence="1">2.7.8.13</ecNumber>
    </recommendedName>
    <alternativeName>
        <fullName evidence="1">UDP-MurNAc-pentapeptide phosphotransferase</fullName>
    </alternativeName>
</protein>
<feature type="chain" id="PRO_0000235482" description="Phospho-N-acetylmuramoyl-pentapeptide-transferase">
    <location>
        <begin position="1"/>
        <end position="360"/>
    </location>
</feature>
<feature type="topological domain" description="Periplasmic" evidence="1">
    <location>
        <begin position="1"/>
        <end position="25"/>
    </location>
</feature>
<feature type="transmembrane region" description="Helical" evidence="1">
    <location>
        <begin position="26"/>
        <end position="46"/>
    </location>
</feature>
<feature type="topological domain" description="Cytoplasmic" evidence="1">
    <location>
        <begin position="47"/>
        <end position="71"/>
    </location>
</feature>
<feature type="transmembrane region" description="Helical" evidence="1">
    <location>
        <begin position="72"/>
        <end position="92"/>
    </location>
</feature>
<feature type="topological domain" description="Periplasmic" evidence="1">
    <location>
        <position position="93"/>
    </location>
</feature>
<feature type="transmembrane region" description="Helical" evidence="1">
    <location>
        <begin position="94"/>
        <end position="114"/>
    </location>
</feature>
<feature type="topological domain" description="Cytoplasmic" evidence="1">
    <location>
        <begin position="115"/>
        <end position="131"/>
    </location>
</feature>
<feature type="transmembrane region" description="Helical" evidence="1">
    <location>
        <begin position="132"/>
        <end position="152"/>
    </location>
</feature>
<feature type="topological domain" description="Periplasmic" evidence="1">
    <location>
        <begin position="153"/>
        <end position="167"/>
    </location>
</feature>
<feature type="transmembrane region" description="Helical" evidence="1">
    <location>
        <begin position="168"/>
        <end position="188"/>
    </location>
</feature>
<feature type="topological domain" description="Cytoplasmic" evidence="1">
    <location>
        <begin position="189"/>
        <end position="198"/>
    </location>
</feature>
<feature type="transmembrane region" description="Helical" evidence="1">
    <location>
        <begin position="199"/>
        <end position="219"/>
    </location>
</feature>
<feature type="topological domain" description="Periplasmic" evidence="1">
    <location>
        <begin position="220"/>
        <end position="235"/>
    </location>
</feature>
<feature type="transmembrane region" description="Helical" evidence="1">
    <location>
        <begin position="236"/>
        <end position="256"/>
    </location>
</feature>
<feature type="topological domain" description="Cytoplasmic" evidence="1">
    <location>
        <begin position="257"/>
        <end position="262"/>
    </location>
</feature>
<feature type="transmembrane region" description="Helical" evidence="1">
    <location>
        <begin position="263"/>
        <end position="283"/>
    </location>
</feature>
<feature type="topological domain" description="Periplasmic" evidence="1">
    <location>
        <begin position="284"/>
        <end position="287"/>
    </location>
</feature>
<feature type="transmembrane region" description="Helical" evidence="1">
    <location>
        <begin position="288"/>
        <end position="308"/>
    </location>
</feature>
<feature type="topological domain" description="Cytoplasmic" evidence="1">
    <location>
        <begin position="309"/>
        <end position="337"/>
    </location>
</feature>
<feature type="transmembrane region" description="Helical" evidence="1">
    <location>
        <begin position="338"/>
        <end position="358"/>
    </location>
</feature>
<feature type="topological domain" description="Periplasmic" evidence="1">
    <location>
        <begin position="359"/>
        <end position="360"/>
    </location>
</feature>